<accession>B5YL10</accession>
<sequence length="330" mass="39190">MKKSLYIISDGELKRKDNTLYFETSEERKYIPVENTREILIFGEVSMNKRLLEFLTESEIIIHFFNYYGYYIGSFYPREHLNSGYMILKQAEHYLDTGKRLNLAEKFVSGAIENIKKVLIYYHNRGKELSEIISKIQEIATNIPDCSTTDELMAIEGNIRDYYYQSFDIILDNEHFIFETRTKRPPKNRINALISFANSLVYTTCLSEIYQTHLDPRIGYLHATNFRRFTLNLDVAEIFKPIIADRAIFSIVNKRIVKPQHFEKKLDGIVLNDKGKQILLQEMDERLRSTIQHKKLGRHVSYRQLIRLELYKIQKHLMEEEEYKPFVTGW</sequence>
<organism>
    <name type="scientific">Thermodesulfovibrio yellowstonii (strain ATCC 51303 / DSM 11347 / YP87)</name>
    <dbReference type="NCBI Taxonomy" id="289376"/>
    <lineage>
        <taxon>Bacteria</taxon>
        <taxon>Pseudomonadati</taxon>
        <taxon>Nitrospirota</taxon>
        <taxon>Thermodesulfovibrionia</taxon>
        <taxon>Thermodesulfovibrionales</taxon>
        <taxon>Thermodesulfovibrionaceae</taxon>
        <taxon>Thermodesulfovibrio</taxon>
    </lineage>
</organism>
<name>CAS1B_THEYD</name>
<proteinExistence type="inferred from homology"/>
<keyword id="KW-0051">Antiviral defense</keyword>
<keyword id="KW-0238">DNA-binding</keyword>
<keyword id="KW-0255">Endonuclease</keyword>
<keyword id="KW-0378">Hydrolase</keyword>
<keyword id="KW-0460">Magnesium</keyword>
<keyword id="KW-0464">Manganese</keyword>
<keyword id="KW-0479">Metal-binding</keyword>
<keyword id="KW-0540">Nuclease</keyword>
<keyword id="KW-1185">Reference proteome</keyword>
<evidence type="ECO:0000255" key="1">
    <source>
        <dbReference type="HAMAP-Rule" id="MF_01470"/>
    </source>
</evidence>
<feature type="chain" id="PRO_0000417087" description="CRISPR-associated endonuclease Cas1 2">
    <location>
        <begin position="1"/>
        <end position="330"/>
    </location>
</feature>
<feature type="binding site" evidence="1">
    <location>
        <position position="156"/>
    </location>
    <ligand>
        <name>Mn(2+)</name>
        <dbReference type="ChEBI" id="CHEBI:29035"/>
    </ligand>
</feature>
<feature type="binding site" evidence="1">
    <location>
        <position position="222"/>
    </location>
    <ligand>
        <name>Mn(2+)</name>
        <dbReference type="ChEBI" id="CHEBI:29035"/>
    </ligand>
</feature>
<feature type="binding site" evidence="1">
    <location>
        <position position="237"/>
    </location>
    <ligand>
        <name>Mn(2+)</name>
        <dbReference type="ChEBI" id="CHEBI:29035"/>
    </ligand>
</feature>
<protein>
    <recommendedName>
        <fullName evidence="1">CRISPR-associated endonuclease Cas1 2</fullName>
        <ecNumber evidence="1">3.1.-.-</ecNumber>
    </recommendedName>
</protein>
<reference key="1">
    <citation type="submission" date="2008-08" db="EMBL/GenBank/DDBJ databases">
        <title>The complete genome sequence of Thermodesulfovibrio yellowstonii strain ATCC 51303 / DSM 11347 / YP87.</title>
        <authorList>
            <person name="Dodson R.J."/>
            <person name="Durkin A.S."/>
            <person name="Wu M."/>
            <person name="Eisen J."/>
            <person name="Sutton G."/>
        </authorList>
    </citation>
    <scope>NUCLEOTIDE SEQUENCE [LARGE SCALE GENOMIC DNA]</scope>
    <source>
        <strain>ATCC 51303 / DSM 11347 / YP87</strain>
    </source>
</reference>
<comment type="function">
    <text evidence="1">CRISPR (clustered regularly interspaced short palindromic repeat), is an adaptive immune system that provides protection against mobile genetic elements (viruses, transposable elements and conjugative plasmids). CRISPR clusters contain spacers, sequences complementary to antecedent mobile elements, and target invading nucleic acids. CRISPR clusters are transcribed and processed into CRISPR RNA (crRNA). Acts as a dsDNA endonuclease. Involved in the integration of spacer DNA into the CRISPR cassette.</text>
</comment>
<comment type="cofactor">
    <cofactor evidence="1">
        <name>Mg(2+)</name>
        <dbReference type="ChEBI" id="CHEBI:18420"/>
    </cofactor>
    <cofactor evidence="1">
        <name>Mn(2+)</name>
        <dbReference type="ChEBI" id="CHEBI:29035"/>
    </cofactor>
</comment>
<comment type="subunit">
    <text evidence="1">Homodimer, forms a heterotetramer with a Cas2 homodimer.</text>
</comment>
<comment type="similarity">
    <text evidence="1">Belongs to the CRISPR-associated endonuclease Cas1 family.</text>
</comment>
<dbReference type="EC" id="3.1.-.-" evidence="1"/>
<dbReference type="EMBL" id="CP001147">
    <property type="protein sequence ID" value="ACI20636.1"/>
    <property type="molecule type" value="Genomic_DNA"/>
</dbReference>
<dbReference type="RefSeq" id="WP_012545370.1">
    <property type="nucleotide sequence ID" value="NC_011296.1"/>
</dbReference>
<dbReference type="RefSeq" id="YP_002248925.1">
    <property type="nucleotide sequence ID" value="NC_011296.1"/>
</dbReference>
<dbReference type="SMR" id="B5YL10"/>
<dbReference type="STRING" id="289376.THEYE_A1101"/>
<dbReference type="EnsemblBacteria" id="ACI20636">
    <property type="protein sequence ID" value="ACI20636"/>
    <property type="gene ID" value="THEYE_A1101"/>
</dbReference>
<dbReference type="KEGG" id="tye:THEYE_A1101"/>
<dbReference type="PATRIC" id="fig|289376.4.peg.1079"/>
<dbReference type="eggNOG" id="COG1518">
    <property type="taxonomic scope" value="Bacteria"/>
</dbReference>
<dbReference type="HOGENOM" id="CLU_052779_2_0_0"/>
<dbReference type="InParanoid" id="B5YL10"/>
<dbReference type="OrthoDB" id="9803119at2"/>
<dbReference type="Proteomes" id="UP000000718">
    <property type="component" value="Chromosome"/>
</dbReference>
<dbReference type="GO" id="GO:0003677">
    <property type="term" value="F:DNA binding"/>
    <property type="evidence" value="ECO:0007669"/>
    <property type="project" value="UniProtKB-KW"/>
</dbReference>
<dbReference type="GO" id="GO:0004520">
    <property type="term" value="F:DNA endonuclease activity"/>
    <property type="evidence" value="ECO:0007669"/>
    <property type="project" value="InterPro"/>
</dbReference>
<dbReference type="GO" id="GO:0046872">
    <property type="term" value="F:metal ion binding"/>
    <property type="evidence" value="ECO:0007669"/>
    <property type="project" value="UniProtKB-UniRule"/>
</dbReference>
<dbReference type="GO" id="GO:0051607">
    <property type="term" value="P:defense response to virus"/>
    <property type="evidence" value="ECO:0007669"/>
    <property type="project" value="UniProtKB-UniRule"/>
</dbReference>
<dbReference type="GO" id="GO:0043571">
    <property type="term" value="P:maintenance of CRISPR repeat elements"/>
    <property type="evidence" value="ECO:0007669"/>
    <property type="project" value="UniProtKB-UniRule"/>
</dbReference>
<dbReference type="CDD" id="cd09722">
    <property type="entry name" value="Cas1_I-B"/>
    <property type="match status" value="1"/>
</dbReference>
<dbReference type="Gene3D" id="1.20.120.920">
    <property type="entry name" value="CRISPR-associated endonuclease Cas1, C-terminal domain"/>
    <property type="match status" value="1"/>
</dbReference>
<dbReference type="Gene3D" id="3.100.10.20">
    <property type="entry name" value="CRISPR-associated endonuclease Cas1, N-terminal domain"/>
    <property type="match status" value="1"/>
</dbReference>
<dbReference type="HAMAP" id="MF_01470">
    <property type="entry name" value="Cas1"/>
    <property type="match status" value="1"/>
</dbReference>
<dbReference type="InterPro" id="IPR002729">
    <property type="entry name" value="CRISPR-assoc_Cas1"/>
</dbReference>
<dbReference type="InterPro" id="IPR042206">
    <property type="entry name" value="CRISPR-assoc_Cas1_C"/>
</dbReference>
<dbReference type="InterPro" id="IPR019858">
    <property type="entry name" value="CRISPR-assoc_Cas1_HMARI/TNEAP"/>
</dbReference>
<dbReference type="InterPro" id="IPR042211">
    <property type="entry name" value="CRISPR-assoc_Cas1_N"/>
</dbReference>
<dbReference type="NCBIfam" id="TIGR00287">
    <property type="entry name" value="cas1"/>
    <property type="match status" value="1"/>
</dbReference>
<dbReference type="NCBIfam" id="TIGR03641">
    <property type="entry name" value="cas1_HMARI"/>
    <property type="match status" value="1"/>
</dbReference>
<dbReference type="PANTHER" id="PTHR43219">
    <property type="entry name" value="CRISPR-ASSOCIATED ENDONUCLEASE CAS1"/>
    <property type="match status" value="1"/>
</dbReference>
<dbReference type="PANTHER" id="PTHR43219:SF1">
    <property type="entry name" value="CRISPR-ASSOCIATED ENDONUCLEASE CAS1"/>
    <property type="match status" value="1"/>
</dbReference>
<dbReference type="Pfam" id="PF01867">
    <property type="entry name" value="Cas_Cas1"/>
    <property type="match status" value="1"/>
</dbReference>
<gene>
    <name evidence="1" type="primary">cas1-2</name>
    <name type="synonym">cas1_1</name>
    <name type="ordered locus">THEYE_A1101</name>
</gene>